<organism>
    <name type="scientific">Yarrowia lipolytica (strain CLIB 122 / E 150)</name>
    <name type="common">Yeast</name>
    <name type="synonym">Candida lipolytica</name>
    <dbReference type="NCBI Taxonomy" id="284591"/>
    <lineage>
        <taxon>Eukaryota</taxon>
        <taxon>Fungi</taxon>
        <taxon>Dikarya</taxon>
        <taxon>Ascomycota</taxon>
        <taxon>Saccharomycotina</taxon>
        <taxon>Dipodascomycetes</taxon>
        <taxon>Dipodascales</taxon>
        <taxon>Dipodascales incertae sedis</taxon>
        <taxon>Yarrowia</taxon>
    </lineage>
</organism>
<keyword id="KW-0507">mRNA processing</keyword>
<keyword id="KW-0539">Nucleus</keyword>
<keyword id="KW-1185">Reference proteome</keyword>
<keyword id="KW-0694">RNA-binding</keyword>
<sequence>MHIFKNLTEPTAVTHSLSCNFTGERNLVLVKGSQLLQIFRYKDDIPTKDEAPRLELITEYYLDGTVTGVTRIKTIDNYDLDSLYISVKHAKAVIVAWNASSFTIDTKSLHYYEKGLVESNFFEPECSSVAVSDEANSFYTCLLFQNDRMAFLPIIEKGLDDDEMPESGQVFDPSFIVKASRLDKRIENVMDICFLHEYRETTMGILFQPKRAWVGMKNILKDTVSYAIVSVDVHQKNSTVIGTLNGLPVDAQKVIPLPAPLGGSLIICANTILYIDSSASYTGVMVNNTHRQNSDLIVSRDQSTLDLRLEGAEVCFIQELGNTALLVTEDGQFFSLLFNKDGRRVASLELRPIEPDNFILSQPSSVAAGPDGTIFLGSRAGDSLLVKWYHGEPESQPEETLDDGNESDDDLYGGDTAQTEDTTNRPLKLRLADRMLGMGPMQSLALGKNRGSQGVEFVTTTGVGANSALAILTSALMPYKRKSLYKDMPGGQFWSVPVRFEEEGEVAKSRTYVVSSDSENSYLYYVDAAGVIEDVSLSTKKKKTKKHFVSNVTTIFSSSMLDSALLQVCLETVNIYDAKIGQPHKYSLPQGTTAVEARVLGNYVLVLLSDGQVKILEAVSINKRPFLKAAQVSIEPASESKAIGIYATDSSLTFGAPSKKRTRQGSPAQDSRPVVVVCYADGSLLLQGLNSDDRLILDASDLSGFIKEKDGQLYDAPLELVDIALSPLGDDHILRDYLVLLTPQQLVVYEPYHYNDKLRFRKIFLERTPTINSDRRLTQVPLINGKHTLGVTGETAYILVKTLHTSPRLIEFGETKGAVAFTSWDGKFAYLTQAGEVAECRFDPSFSLETNWPVKHVQLCGETISKVTYHETMDVYVIATHKTVPHVVRDEDDEVIESLTPDIMPATTYQGAIRIVNPYSWTVIDSYEFEMPAEAALCCESVKLSISDRKSQKREVVAVGTSILRGEDLAARGALYLFDVIEIVPEKERPETNRRLKKLVQDRVRGAFTAVCEVSGRLLAVQGQKLLVQALQDDLTLVPVAFLDMQTYVAVAKSLNSMLLLGDATRSVQFVGFSMDPYQMIPFARDLQRVLVTTCDFAIEGENLTFVVADLQKRLHILEYDPDDPQSYSGARLLRRSVFYSGKVIDSSAMVPINEDRFMVIGVCSDGSVTDVVPCPEDAYRRLYAIQTQITDKEAHVCGLHPRAYRYDPILPGTGNSPHRPILDGHTLIRFANLPRNKQNVYANRLGQRYQQLIWKDLELISDLFKKCI</sequence>
<proteinExistence type="inferred from homology"/>
<protein>
    <recommendedName>
        <fullName>Protein CFT1</fullName>
    </recommendedName>
    <alternativeName>
        <fullName>Cleavage factor two protein 1</fullName>
    </alternativeName>
</protein>
<evidence type="ECO:0000250" key="1"/>
<evidence type="ECO:0000256" key="2">
    <source>
        <dbReference type="SAM" id="MobiDB-lite"/>
    </source>
</evidence>
<evidence type="ECO:0000305" key="3"/>
<name>CFT1_YARLI</name>
<feature type="chain" id="PRO_0000290636" description="Protein CFT1">
    <location>
        <begin position="1"/>
        <end position="1269"/>
    </location>
</feature>
<feature type="region of interest" description="Disordered" evidence="2">
    <location>
        <begin position="393"/>
        <end position="427"/>
    </location>
</feature>
<feature type="compositionally biased region" description="Acidic residues" evidence="2">
    <location>
        <begin position="395"/>
        <end position="412"/>
    </location>
</feature>
<feature type="compositionally biased region" description="Polar residues" evidence="2">
    <location>
        <begin position="416"/>
        <end position="425"/>
    </location>
</feature>
<gene>
    <name type="primary">CFT1</name>
    <name type="ordered locus">YALI0E03982g</name>
</gene>
<accession>Q6C740</accession>
<comment type="function">
    <text evidence="1">RNA-binding component of the cleavage and polyadenylation factor (CPF) complex, which plays a key role in polyadenylation-dependent pre-mRNA 3'-end formation and cooperates with cleavage factors including the CFIA complex and NAB4/CFIB. Involved in poly(A) site recognition. May be involved in coupling transcription termination and mRNA 3'-end formation (By similarity).</text>
</comment>
<comment type="subcellular location">
    <subcellularLocation>
        <location evidence="1">Nucleus</location>
    </subcellularLocation>
</comment>
<comment type="similarity">
    <text evidence="3">Belongs to the CFT1 family.</text>
</comment>
<reference key="1">
    <citation type="journal article" date="2004" name="Nature">
        <title>Genome evolution in yeasts.</title>
        <authorList>
            <person name="Dujon B."/>
            <person name="Sherman D."/>
            <person name="Fischer G."/>
            <person name="Durrens P."/>
            <person name="Casaregola S."/>
            <person name="Lafontaine I."/>
            <person name="de Montigny J."/>
            <person name="Marck C."/>
            <person name="Neuveglise C."/>
            <person name="Talla E."/>
            <person name="Goffard N."/>
            <person name="Frangeul L."/>
            <person name="Aigle M."/>
            <person name="Anthouard V."/>
            <person name="Babour A."/>
            <person name="Barbe V."/>
            <person name="Barnay S."/>
            <person name="Blanchin S."/>
            <person name="Beckerich J.-M."/>
            <person name="Beyne E."/>
            <person name="Bleykasten C."/>
            <person name="Boisrame A."/>
            <person name="Boyer J."/>
            <person name="Cattolico L."/>
            <person name="Confanioleri F."/>
            <person name="de Daruvar A."/>
            <person name="Despons L."/>
            <person name="Fabre E."/>
            <person name="Fairhead C."/>
            <person name="Ferry-Dumazet H."/>
            <person name="Groppi A."/>
            <person name="Hantraye F."/>
            <person name="Hennequin C."/>
            <person name="Jauniaux N."/>
            <person name="Joyet P."/>
            <person name="Kachouri R."/>
            <person name="Kerrest A."/>
            <person name="Koszul R."/>
            <person name="Lemaire M."/>
            <person name="Lesur I."/>
            <person name="Ma L."/>
            <person name="Muller H."/>
            <person name="Nicaud J.-M."/>
            <person name="Nikolski M."/>
            <person name="Oztas S."/>
            <person name="Ozier-Kalogeropoulos O."/>
            <person name="Pellenz S."/>
            <person name="Potier S."/>
            <person name="Richard G.-F."/>
            <person name="Straub M.-L."/>
            <person name="Suleau A."/>
            <person name="Swennen D."/>
            <person name="Tekaia F."/>
            <person name="Wesolowski-Louvel M."/>
            <person name="Westhof E."/>
            <person name="Wirth B."/>
            <person name="Zeniou-Meyer M."/>
            <person name="Zivanovic Y."/>
            <person name="Bolotin-Fukuhara M."/>
            <person name="Thierry A."/>
            <person name="Bouchier C."/>
            <person name="Caudron B."/>
            <person name="Scarpelli C."/>
            <person name="Gaillardin C."/>
            <person name="Weissenbach J."/>
            <person name="Wincker P."/>
            <person name="Souciet J.-L."/>
        </authorList>
    </citation>
    <scope>NUCLEOTIDE SEQUENCE [LARGE SCALE GENOMIC DNA]</scope>
    <source>
        <strain>CLIB 122 / E 150</strain>
    </source>
</reference>
<dbReference type="EMBL" id="CR382131">
    <property type="protein sequence ID" value="CAG79101.1"/>
    <property type="molecule type" value="Genomic_DNA"/>
</dbReference>
<dbReference type="RefSeq" id="XP_503522.1">
    <property type="nucleotide sequence ID" value="XM_503522.1"/>
</dbReference>
<dbReference type="SMR" id="Q6C740"/>
<dbReference type="FunCoup" id="Q6C740">
    <property type="interactions" value="1171"/>
</dbReference>
<dbReference type="STRING" id="284591.Q6C740"/>
<dbReference type="EnsemblFungi" id="CAG79101">
    <property type="protein sequence ID" value="CAG79101"/>
    <property type="gene ID" value="YALI0_E03982g"/>
</dbReference>
<dbReference type="KEGG" id="yli:2912174"/>
<dbReference type="VEuPathDB" id="FungiDB:YALI0_E03982g"/>
<dbReference type="HOGENOM" id="CLU_002414_2_1_1"/>
<dbReference type="InParanoid" id="Q6C740"/>
<dbReference type="OMA" id="PMTKFKL"/>
<dbReference type="OrthoDB" id="40431at4891"/>
<dbReference type="Proteomes" id="UP000001300">
    <property type="component" value="Chromosome E"/>
</dbReference>
<dbReference type="GO" id="GO:0005847">
    <property type="term" value="C:mRNA cleavage and polyadenylation specificity factor complex"/>
    <property type="evidence" value="ECO:0000318"/>
    <property type="project" value="GO_Central"/>
</dbReference>
<dbReference type="GO" id="GO:0005634">
    <property type="term" value="C:nucleus"/>
    <property type="evidence" value="ECO:0000318"/>
    <property type="project" value="GO_Central"/>
</dbReference>
<dbReference type="GO" id="GO:0003723">
    <property type="term" value="F:RNA binding"/>
    <property type="evidence" value="ECO:0007669"/>
    <property type="project" value="UniProtKB-KW"/>
</dbReference>
<dbReference type="GO" id="GO:0006397">
    <property type="term" value="P:mRNA processing"/>
    <property type="evidence" value="ECO:0007669"/>
    <property type="project" value="UniProtKB-KW"/>
</dbReference>
<dbReference type="FunFam" id="2.130.10.10:FF:001516">
    <property type="entry name" value="Protein CFT1"/>
    <property type="match status" value="1"/>
</dbReference>
<dbReference type="Gene3D" id="2.130.10.10">
    <property type="entry name" value="YVTN repeat-like/Quinoprotein amine dehydrogenase"/>
    <property type="match status" value="3"/>
</dbReference>
<dbReference type="InterPro" id="IPR018846">
    <property type="entry name" value="Beta-prop_RSE1/DDB1/CPSF1_1st"/>
</dbReference>
<dbReference type="InterPro" id="IPR004871">
    <property type="entry name" value="Cleavage/polyA-sp_fac_asu_C"/>
</dbReference>
<dbReference type="InterPro" id="IPR050358">
    <property type="entry name" value="RSE1/DDB1/CFT1/CPSF1"/>
</dbReference>
<dbReference type="InterPro" id="IPR015943">
    <property type="entry name" value="WD40/YVTN_repeat-like_dom_sf"/>
</dbReference>
<dbReference type="PANTHER" id="PTHR10644">
    <property type="entry name" value="DNA REPAIR/RNA PROCESSING CPSF FAMILY"/>
    <property type="match status" value="1"/>
</dbReference>
<dbReference type="Pfam" id="PF10433">
    <property type="entry name" value="Beta-prop_RSE1_1st"/>
    <property type="match status" value="1"/>
</dbReference>
<dbReference type="Pfam" id="PF03178">
    <property type="entry name" value="CPSF_A"/>
    <property type="match status" value="1"/>
</dbReference>